<protein>
    <recommendedName>
        <fullName evidence="1">Uracil-DNA glycosylase</fullName>
        <shortName evidence="1">UDG</shortName>
        <ecNumber evidence="1">3.2.2.27</ecNumber>
    </recommendedName>
</protein>
<organism>
    <name type="scientific">Campylobacter jejuni subsp. jejuni serotype O:23/36 (strain 81-176)</name>
    <dbReference type="NCBI Taxonomy" id="354242"/>
    <lineage>
        <taxon>Bacteria</taxon>
        <taxon>Pseudomonadati</taxon>
        <taxon>Campylobacterota</taxon>
        <taxon>Epsilonproteobacteria</taxon>
        <taxon>Campylobacterales</taxon>
        <taxon>Campylobacteraceae</taxon>
        <taxon>Campylobacter</taxon>
    </lineage>
</organism>
<reference key="1">
    <citation type="submission" date="2006-12" db="EMBL/GenBank/DDBJ databases">
        <authorList>
            <person name="Fouts D.E."/>
            <person name="Nelson K.E."/>
            <person name="Sebastian Y."/>
        </authorList>
    </citation>
    <scope>NUCLEOTIDE SEQUENCE [LARGE SCALE GENOMIC DNA]</scope>
    <source>
        <strain>81-176</strain>
    </source>
</reference>
<keyword id="KW-0963">Cytoplasm</keyword>
<keyword id="KW-0227">DNA damage</keyword>
<keyword id="KW-0234">DNA repair</keyword>
<keyword id="KW-0378">Hydrolase</keyword>
<sequence>MEEITINIDKIKINDDWKEFLRDEFQKKYFLEIKKQYLNAINQNIIIYPPANLIFNAFNLCPLKEIKIIILGQDPYHQPNQAMGLSFSVPKNVKIPPSLNNIFKELQNDLNITPAKSGDLSSWAKQGVLLLNSILSVEANKAASHSSWGWQEFSDAIIHKLSNEKSGLVFMLWGNYAKSKEILIDNTKHLILKAAHPSPLARTGFLGCKHFSKANEFLKKVGKIPIDWKIV</sequence>
<accession>A1VXG9</accession>
<feature type="chain" id="PRO_1000009876" description="Uracil-DNA glycosylase">
    <location>
        <begin position="1"/>
        <end position="231"/>
    </location>
</feature>
<feature type="active site" description="Proton acceptor" evidence="1">
    <location>
        <position position="74"/>
    </location>
</feature>
<gene>
    <name evidence="1" type="primary">ung</name>
    <name type="ordered locus">CJJ81176_0121</name>
</gene>
<comment type="function">
    <text evidence="1">Excises uracil residues from the DNA which can arise as a result of misincorporation of dUMP residues by DNA polymerase or due to deamination of cytosine.</text>
</comment>
<comment type="catalytic activity">
    <reaction evidence="1">
        <text>Hydrolyzes single-stranded DNA or mismatched double-stranded DNA and polynucleotides, releasing free uracil.</text>
        <dbReference type="EC" id="3.2.2.27"/>
    </reaction>
</comment>
<comment type="subcellular location">
    <subcellularLocation>
        <location evidence="1">Cytoplasm</location>
    </subcellularLocation>
</comment>
<comment type="similarity">
    <text evidence="1">Belongs to the uracil-DNA glycosylase (UDG) superfamily. UNG family.</text>
</comment>
<name>UNG_CAMJJ</name>
<dbReference type="EC" id="3.2.2.27" evidence="1"/>
<dbReference type="EMBL" id="CP000538">
    <property type="protein sequence ID" value="EAQ71923.1"/>
    <property type="molecule type" value="Genomic_DNA"/>
</dbReference>
<dbReference type="RefSeq" id="WP_002854281.1">
    <property type="nucleotide sequence ID" value="NC_008787.1"/>
</dbReference>
<dbReference type="SMR" id="A1VXG9"/>
<dbReference type="KEGG" id="cjj:CJJ81176_0121"/>
<dbReference type="eggNOG" id="COG0692">
    <property type="taxonomic scope" value="Bacteria"/>
</dbReference>
<dbReference type="HOGENOM" id="CLU_032162_1_1_7"/>
<dbReference type="Proteomes" id="UP000000646">
    <property type="component" value="Chromosome"/>
</dbReference>
<dbReference type="GO" id="GO:0005737">
    <property type="term" value="C:cytoplasm"/>
    <property type="evidence" value="ECO:0007669"/>
    <property type="project" value="UniProtKB-SubCell"/>
</dbReference>
<dbReference type="GO" id="GO:0004844">
    <property type="term" value="F:uracil DNA N-glycosylase activity"/>
    <property type="evidence" value="ECO:0007669"/>
    <property type="project" value="UniProtKB-UniRule"/>
</dbReference>
<dbReference type="GO" id="GO:0097510">
    <property type="term" value="P:base-excision repair, AP site formation via deaminated base removal"/>
    <property type="evidence" value="ECO:0007669"/>
    <property type="project" value="TreeGrafter"/>
</dbReference>
<dbReference type="CDD" id="cd10027">
    <property type="entry name" value="UDG-F1-like"/>
    <property type="match status" value="1"/>
</dbReference>
<dbReference type="FunFam" id="3.40.470.10:FF:000001">
    <property type="entry name" value="Uracil-DNA glycosylase"/>
    <property type="match status" value="1"/>
</dbReference>
<dbReference type="Gene3D" id="3.40.470.10">
    <property type="entry name" value="Uracil-DNA glycosylase-like domain"/>
    <property type="match status" value="1"/>
</dbReference>
<dbReference type="HAMAP" id="MF_00148">
    <property type="entry name" value="UDG"/>
    <property type="match status" value="1"/>
</dbReference>
<dbReference type="InterPro" id="IPR002043">
    <property type="entry name" value="UDG_fam1"/>
</dbReference>
<dbReference type="InterPro" id="IPR018085">
    <property type="entry name" value="Ura-DNA_Glyclase_AS"/>
</dbReference>
<dbReference type="InterPro" id="IPR005122">
    <property type="entry name" value="Uracil-DNA_glycosylase-like"/>
</dbReference>
<dbReference type="InterPro" id="IPR036895">
    <property type="entry name" value="Uracil-DNA_glycosylase-like_sf"/>
</dbReference>
<dbReference type="NCBIfam" id="NF003588">
    <property type="entry name" value="PRK05254.1-1"/>
    <property type="match status" value="1"/>
</dbReference>
<dbReference type="NCBIfam" id="NF003589">
    <property type="entry name" value="PRK05254.1-2"/>
    <property type="match status" value="1"/>
</dbReference>
<dbReference type="NCBIfam" id="NF003591">
    <property type="entry name" value="PRK05254.1-4"/>
    <property type="match status" value="1"/>
</dbReference>
<dbReference type="NCBIfam" id="NF003592">
    <property type="entry name" value="PRK05254.1-5"/>
    <property type="match status" value="1"/>
</dbReference>
<dbReference type="NCBIfam" id="TIGR00628">
    <property type="entry name" value="ung"/>
    <property type="match status" value="1"/>
</dbReference>
<dbReference type="PANTHER" id="PTHR11264">
    <property type="entry name" value="URACIL-DNA GLYCOSYLASE"/>
    <property type="match status" value="1"/>
</dbReference>
<dbReference type="PANTHER" id="PTHR11264:SF0">
    <property type="entry name" value="URACIL-DNA GLYCOSYLASE"/>
    <property type="match status" value="1"/>
</dbReference>
<dbReference type="Pfam" id="PF03167">
    <property type="entry name" value="UDG"/>
    <property type="match status" value="1"/>
</dbReference>
<dbReference type="SMART" id="SM00986">
    <property type="entry name" value="UDG"/>
    <property type="match status" value="1"/>
</dbReference>
<dbReference type="SMART" id="SM00987">
    <property type="entry name" value="UreE_C"/>
    <property type="match status" value="1"/>
</dbReference>
<dbReference type="SUPFAM" id="SSF52141">
    <property type="entry name" value="Uracil-DNA glycosylase-like"/>
    <property type="match status" value="1"/>
</dbReference>
<dbReference type="PROSITE" id="PS00130">
    <property type="entry name" value="U_DNA_GLYCOSYLASE"/>
    <property type="match status" value="1"/>
</dbReference>
<proteinExistence type="inferred from homology"/>
<evidence type="ECO:0000255" key="1">
    <source>
        <dbReference type="HAMAP-Rule" id="MF_00148"/>
    </source>
</evidence>